<gene>
    <name evidence="1" type="primary">nudC</name>
    <name type="ordered locus">MS0182</name>
</gene>
<comment type="function">
    <text evidence="1">mRNA decapping enzyme that specifically removes the nicotinamide adenine dinucleotide (NAD) cap from a subset of mRNAs by hydrolyzing the diphosphate linkage to produce nicotinamide mononucleotide (NMN) and 5' monophosphate mRNA. The NAD-cap is present at the 5'-end of some mRNAs and stabilizes RNA against 5'-processing. Has preference for mRNAs with a 5'-end purine. Catalyzes the hydrolysis of a broad range of dinucleotide pyrophosphates.</text>
</comment>
<comment type="catalytic activity">
    <reaction evidence="1">
        <text>a 5'-end NAD(+)-phospho-ribonucleoside in mRNA + H2O = a 5'-end phospho-adenosine-phospho-ribonucleoside in mRNA + beta-nicotinamide D-ribonucleotide + 2 H(+)</text>
        <dbReference type="Rhea" id="RHEA:60876"/>
        <dbReference type="Rhea" id="RHEA-COMP:15698"/>
        <dbReference type="Rhea" id="RHEA-COMP:15719"/>
        <dbReference type="ChEBI" id="CHEBI:14649"/>
        <dbReference type="ChEBI" id="CHEBI:15377"/>
        <dbReference type="ChEBI" id="CHEBI:15378"/>
        <dbReference type="ChEBI" id="CHEBI:144029"/>
        <dbReference type="ChEBI" id="CHEBI:144051"/>
    </reaction>
    <physiologicalReaction direction="left-to-right" evidence="1">
        <dbReference type="Rhea" id="RHEA:60877"/>
    </physiologicalReaction>
</comment>
<comment type="catalytic activity">
    <reaction evidence="1">
        <text>NAD(+) + H2O = beta-nicotinamide D-ribonucleotide + AMP + 2 H(+)</text>
        <dbReference type="Rhea" id="RHEA:11800"/>
        <dbReference type="ChEBI" id="CHEBI:14649"/>
        <dbReference type="ChEBI" id="CHEBI:15377"/>
        <dbReference type="ChEBI" id="CHEBI:15378"/>
        <dbReference type="ChEBI" id="CHEBI:57540"/>
        <dbReference type="ChEBI" id="CHEBI:456215"/>
        <dbReference type="EC" id="3.6.1.22"/>
    </reaction>
</comment>
<comment type="catalytic activity">
    <reaction evidence="1">
        <text>NADH + H2O = reduced beta-nicotinamide D-ribonucleotide + AMP + 2 H(+)</text>
        <dbReference type="Rhea" id="RHEA:48868"/>
        <dbReference type="ChEBI" id="CHEBI:15377"/>
        <dbReference type="ChEBI" id="CHEBI:15378"/>
        <dbReference type="ChEBI" id="CHEBI:57945"/>
        <dbReference type="ChEBI" id="CHEBI:90832"/>
        <dbReference type="ChEBI" id="CHEBI:456215"/>
        <dbReference type="EC" id="3.6.1.22"/>
    </reaction>
</comment>
<comment type="cofactor">
    <cofactor evidence="1">
        <name>Mg(2+)</name>
        <dbReference type="ChEBI" id="CHEBI:18420"/>
    </cofactor>
    <cofactor evidence="1">
        <name>Mn(2+)</name>
        <dbReference type="ChEBI" id="CHEBI:29035"/>
    </cofactor>
    <text evidence="1">Divalent metal cations. Mg(2+) or Mn(2+).</text>
</comment>
<comment type="cofactor">
    <cofactor evidence="1">
        <name>Zn(2+)</name>
        <dbReference type="ChEBI" id="CHEBI:29105"/>
    </cofactor>
    <text evidence="1">Binds 1 zinc ion per subunit.</text>
</comment>
<comment type="subunit">
    <text evidence="1">Homodimer.</text>
</comment>
<comment type="similarity">
    <text evidence="1">Belongs to the Nudix hydrolase family. NudC subfamily.</text>
</comment>
<accession>Q65W71</accession>
<organism>
    <name type="scientific">Mannheimia succiniciproducens (strain KCTC 0769BP / MBEL55E)</name>
    <dbReference type="NCBI Taxonomy" id="221988"/>
    <lineage>
        <taxon>Bacteria</taxon>
        <taxon>Pseudomonadati</taxon>
        <taxon>Pseudomonadota</taxon>
        <taxon>Gammaproteobacteria</taxon>
        <taxon>Pasteurellales</taxon>
        <taxon>Pasteurellaceae</taxon>
        <taxon>Basfia</taxon>
    </lineage>
</organism>
<feature type="chain" id="PRO_0000056968" description="NAD-capped RNA hydrolase NudC">
    <location>
        <begin position="1"/>
        <end position="267"/>
    </location>
</feature>
<feature type="domain" description="Nudix hydrolase" evidence="1">
    <location>
        <begin position="128"/>
        <end position="257"/>
    </location>
</feature>
<feature type="short sequence motif" description="Nudix box" evidence="1">
    <location>
        <begin position="167"/>
        <end position="188"/>
    </location>
</feature>
<feature type="binding site" evidence="1">
    <location>
        <position position="70"/>
    </location>
    <ligand>
        <name>substrate</name>
    </ligand>
</feature>
<feature type="binding site" evidence="1">
    <location>
        <position position="99"/>
    </location>
    <ligand>
        <name>Zn(2+)</name>
        <dbReference type="ChEBI" id="CHEBI:29105"/>
    </ligand>
</feature>
<feature type="binding site" evidence="1">
    <location>
        <position position="102"/>
    </location>
    <ligand>
        <name>Zn(2+)</name>
        <dbReference type="ChEBI" id="CHEBI:29105"/>
    </ligand>
</feature>
<feature type="binding site" evidence="1">
    <location>
        <position position="112"/>
    </location>
    <ligand>
        <name>substrate</name>
    </ligand>
</feature>
<feature type="binding site" evidence="1">
    <location>
        <position position="117"/>
    </location>
    <ligand>
        <name>Zn(2+)</name>
        <dbReference type="ChEBI" id="CHEBI:29105"/>
    </ligand>
</feature>
<feature type="binding site" evidence="1">
    <location>
        <position position="122"/>
    </location>
    <ligand>
        <name>Zn(2+)</name>
        <dbReference type="ChEBI" id="CHEBI:29105"/>
    </ligand>
</feature>
<feature type="binding site" evidence="1">
    <location>
        <position position="127"/>
    </location>
    <ligand>
        <name>substrate</name>
    </ligand>
</feature>
<feature type="binding site" evidence="1">
    <location>
        <position position="166"/>
    </location>
    <ligand>
        <name>a divalent metal cation</name>
        <dbReference type="ChEBI" id="CHEBI:60240"/>
        <label>1</label>
    </ligand>
</feature>
<feature type="binding site" evidence="1">
    <location>
        <position position="182"/>
    </location>
    <ligand>
        <name>a divalent metal cation</name>
        <dbReference type="ChEBI" id="CHEBI:60240"/>
        <label>2</label>
    </ligand>
</feature>
<feature type="binding site" evidence="1">
    <location>
        <position position="182"/>
    </location>
    <ligand>
        <name>a divalent metal cation</name>
        <dbReference type="ChEBI" id="CHEBI:60240"/>
        <label>3</label>
    </ligand>
</feature>
<feature type="binding site" evidence="1">
    <location>
        <position position="186"/>
    </location>
    <ligand>
        <name>a divalent metal cation</name>
        <dbReference type="ChEBI" id="CHEBI:60240"/>
        <label>1</label>
    </ligand>
</feature>
<feature type="binding site" evidence="1">
    <location>
        <position position="186"/>
    </location>
    <ligand>
        <name>a divalent metal cation</name>
        <dbReference type="ChEBI" id="CHEBI:60240"/>
        <label>3</label>
    </ligand>
</feature>
<feature type="binding site" evidence="1">
    <location>
        <begin position="200"/>
        <end position="207"/>
    </location>
    <ligand>
        <name>substrate</name>
    </ligand>
</feature>
<feature type="binding site" evidence="1">
    <location>
        <position position="227"/>
    </location>
    <ligand>
        <name>a divalent metal cation</name>
        <dbReference type="ChEBI" id="CHEBI:60240"/>
        <label>1</label>
    </ligand>
</feature>
<feature type="binding site" evidence="1">
    <location>
        <position position="227"/>
    </location>
    <ligand>
        <name>a divalent metal cation</name>
        <dbReference type="ChEBI" id="CHEBI:60240"/>
        <label>3</label>
    </ligand>
</feature>
<feature type="binding site" evidence="1">
    <location>
        <position position="250"/>
    </location>
    <ligand>
        <name>substrate</name>
    </ligand>
</feature>
<reference key="1">
    <citation type="journal article" date="2004" name="Nat. Biotechnol.">
        <title>The genome sequence of the capnophilic rumen bacterium Mannheimia succiniciproducens.</title>
        <authorList>
            <person name="Hong S.H."/>
            <person name="Kim J.S."/>
            <person name="Lee S.Y."/>
            <person name="In Y.H."/>
            <person name="Choi S.S."/>
            <person name="Rih J.-K."/>
            <person name="Kim C.H."/>
            <person name="Jeong H."/>
            <person name="Hur C.G."/>
            <person name="Kim J.J."/>
        </authorList>
    </citation>
    <scope>NUCLEOTIDE SEQUENCE [LARGE SCALE GENOMIC DNA]</scope>
    <source>
        <strain>KCTC 0769BP / MBEL55E</strain>
    </source>
</reference>
<protein>
    <recommendedName>
        <fullName evidence="1">NAD-capped RNA hydrolase NudC</fullName>
        <shortName evidence="1">DeNADding enzyme NudC</shortName>
        <ecNumber evidence="1">3.6.1.-</ecNumber>
    </recommendedName>
    <alternativeName>
        <fullName evidence="1">NADH pyrophosphatase</fullName>
        <ecNumber evidence="1">3.6.1.22</ecNumber>
    </alternativeName>
</protein>
<sequence length="267" mass="31079">MQLIRSSDYGFWLLSQGSHIHLVNNYLPEGRAEDFHLQGKKGMVIGELDRQPLWLVEEQPNDTRAYFDLRDQLYLPERTFNLLNRGVELNHFFKTHQFCGKCGDKTMQTEDEWAVQCTNEECNYRTYPVICPSIIVAIRRGKEILLANHRRHAPKYGKGGMYTTLAGFVEVGESFEQTIHREVFEETGIKVKNIRYFGSQPWAFPNSQMVGFLADYESGEIRLQEEEIADAKWFRYDEPYPEFPEKGTIARALIEATLKLCAEHQDK</sequence>
<name>NUDC_MANSM</name>
<keyword id="KW-0378">Hydrolase</keyword>
<keyword id="KW-0460">Magnesium</keyword>
<keyword id="KW-0464">Manganese</keyword>
<keyword id="KW-0479">Metal-binding</keyword>
<keyword id="KW-0520">NAD</keyword>
<keyword id="KW-0862">Zinc</keyword>
<evidence type="ECO:0000255" key="1">
    <source>
        <dbReference type="HAMAP-Rule" id="MF_00297"/>
    </source>
</evidence>
<dbReference type="EC" id="3.6.1.-" evidence="1"/>
<dbReference type="EC" id="3.6.1.22" evidence="1"/>
<dbReference type="EMBL" id="AE016827">
    <property type="protein sequence ID" value="AAU36789.1"/>
    <property type="molecule type" value="Genomic_DNA"/>
</dbReference>
<dbReference type="RefSeq" id="WP_011199364.1">
    <property type="nucleotide sequence ID" value="NC_006300.1"/>
</dbReference>
<dbReference type="SMR" id="Q65W71"/>
<dbReference type="STRING" id="221988.MS0182"/>
<dbReference type="KEGG" id="msu:MS0182"/>
<dbReference type="eggNOG" id="COG2816">
    <property type="taxonomic scope" value="Bacteria"/>
</dbReference>
<dbReference type="HOGENOM" id="CLU_037162_0_1_6"/>
<dbReference type="OrthoDB" id="9791656at2"/>
<dbReference type="Proteomes" id="UP000000607">
    <property type="component" value="Chromosome"/>
</dbReference>
<dbReference type="GO" id="GO:0005829">
    <property type="term" value="C:cytosol"/>
    <property type="evidence" value="ECO:0007669"/>
    <property type="project" value="TreeGrafter"/>
</dbReference>
<dbReference type="GO" id="GO:0000287">
    <property type="term" value="F:magnesium ion binding"/>
    <property type="evidence" value="ECO:0007669"/>
    <property type="project" value="UniProtKB-UniRule"/>
</dbReference>
<dbReference type="GO" id="GO:0030145">
    <property type="term" value="F:manganese ion binding"/>
    <property type="evidence" value="ECO:0007669"/>
    <property type="project" value="UniProtKB-UniRule"/>
</dbReference>
<dbReference type="GO" id="GO:0000210">
    <property type="term" value="F:NAD+ diphosphatase activity"/>
    <property type="evidence" value="ECO:0007669"/>
    <property type="project" value="UniProtKB-UniRule"/>
</dbReference>
<dbReference type="GO" id="GO:0035529">
    <property type="term" value="F:NADH pyrophosphatase activity"/>
    <property type="evidence" value="ECO:0007669"/>
    <property type="project" value="TreeGrafter"/>
</dbReference>
<dbReference type="GO" id="GO:0110153">
    <property type="term" value="F:RNA NAD-cap (NMN-forming) hydrolase activity"/>
    <property type="evidence" value="ECO:0007669"/>
    <property type="project" value="RHEA"/>
</dbReference>
<dbReference type="GO" id="GO:0008270">
    <property type="term" value="F:zinc ion binding"/>
    <property type="evidence" value="ECO:0007669"/>
    <property type="project" value="UniProtKB-UniRule"/>
</dbReference>
<dbReference type="GO" id="GO:0019677">
    <property type="term" value="P:NAD catabolic process"/>
    <property type="evidence" value="ECO:0007669"/>
    <property type="project" value="TreeGrafter"/>
</dbReference>
<dbReference type="GO" id="GO:0006734">
    <property type="term" value="P:NADH metabolic process"/>
    <property type="evidence" value="ECO:0007669"/>
    <property type="project" value="TreeGrafter"/>
</dbReference>
<dbReference type="GO" id="GO:0006742">
    <property type="term" value="P:NADP catabolic process"/>
    <property type="evidence" value="ECO:0007669"/>
    <property type="project" value="TreeGrafter"/>
</dbReference>
<dbReference type="CDD" id="cd03429">
    <property type="entry name" value="NUDIX_NADH_pyrophosphatase_Nudt13"/>
    <property type="match status" value="1"/>
</dbReference>
<dbReference type="FunFam" id="3.90.79.10:FF:000004">
    <property type="entry name" value="NADH pyrophosphatase"/>
    <property type="match status" value="1"/>
</dbReference>
<dbReference type="Gene3D" id="3.90.79.20">
    <property type="match status" value="1"/>
</dbReference>
<dbReference type="Gene3D" id="3.90.79.10">
    <property type="entry name" value="Nucleoside Triphosphate Pyrophosphohydrolase"/>
    <property type="match status" value="1"/>
</dbReference>
<dbReference type="HAMAP" id="MF_00297">
    <property type="entry name" value="Nudix_NudC"/>
    <property type="match status" value="1"/>
</dbReference>
<dbReference type="InterPro" id="IPR050241">
    <property type="entry name" value="NAD-cap_RNA_hydrolase_NudC"/>
</dbReference>
<dbReference type="InterPro" id="IPR049734">
    <property type="entry name" value="NudC-like_C"/>
</dbReference>
<dbReference type="InterPro" id="IPR015797">
    <property type="entry name" value="NUDIX_hydrolase-like_dom_sf"/>
</dbReference>
<dbReference type="InterPro" id="IPR020084">
    <property type="entry name" value="NUDIX_hydrolase_CS"/>
</dbReference>
<dbReference type="InterPro" id="IPR000086">
    <property type="entry name" value="NUDIX_hydrolase_dom"/>
</dbReference>
<dbReference type="InterPro" id="IPR022925">
    <property type="entry name" value="RNA_Hydrolase_NudC"/>
</dbReference>
<dbReference type="InterPro" id="IPR015376">
    <property type="entry name" value="Znr_NADH_PPase"/>
</dbReference>
<dbReference type="NCBIfam" id="NF001299">
    <property type="entry name" value="PRK00241.1"/>
    <property type="match status" value="1"/>
</dbReference>
<dbReference type="PANTHER" id="PTHR42904:SF6">
    <property type="entry name" value="NAD-CAPPED RNA HYDROLASE NUDT12"/>
    <property type="match status" value="1"/>
</dbReference>
<dbReference type="PANTHER" id="PTHR42904">
    <property type="entry name" value="NUDIX HYDROLASE, NUDC SUBFAMILY"/>
    <property type="match status" value="1"/>
</dbReference>
<dbReference type="Pfam" id="PF00293">
    <property type="entry name" value="NUDIX"/>
    <property type="match status" value="1"/>
</dbReference>
<dbReference type="Pfam" id="PF09297">
    <property type="entry name" value="Zn_ribbon_NUD"/>
    <property type="match status" value="1"/>
</dbReference>
<dbReference type="SUPFAM" id="SSF55811">
    <property type="entry name" value="Nudix"/>
    <property type="match status" value="2"/>
</dbReference>
<dbReference type="PROSITE" id="PS51462">
    <property type="entry name" value="NUDIX"/>
    <property type="match status" value="1"/>
</dbReference>
<dbReference type="PROSITE" id="PS00893">
    <property type="entry name" value="NUDIX_BOX"/>
    <property type="match status" value="1"/>
</dbReference>
<proteinExistence type="inferred from homology"/>